<comment type="function">
    <text evidence="1">Together with its co-chaperonin GroES, plays an essential role in assisting protein folding. The GroEL-GroES system forms a nano-cage that allows encapsulation of the non-native substrate proteins and provides a physical environment optimized to promote and accelerate protein folding.</text>
</comment>
<comment type="catalytic activity">
    <reaction evidence="1">
        <text>ATP + H2O + a folded polypeptide = ADP + phosphate + an unfolded polypeptide.</text>
        <dbReference type="EC" id="5.6.1.7"/>
    </reaction>
</comment>
<comment type="subunit">
    <text evidence="1">Forms a cylinder of 14 subunits composed of two heptameric rings stacked back-to-back. Interacts with the co-chaperonin GroES.</text>
</comment>
<comment type="subcellular location">
    <subcellularLocation>
        <location evidence="1">Cytoplasm</location>
    </subcellularLocation>
</comment>
<comment type="similarity">
    <text evidence="1">Belongs to the chaperonin (HSP60) family.</text>
</comment>
<organism>
    <name type="scientific">Acinetobacter baumannii (strain ACICU)</name>
    <dbReference type="NCBI Taxonomy" id="405416"/>
    <lineage>
        <taxon>Bacteria</taxon>
        <taxon>Pseudomonadati</taxon>
        <taxon>Pseudomonadota</taxon>
        <taxon>Gammaproteobacteria</taxon>
        <taxon>Moraxellales</taxon>
        <taxon>Moraxellaceae</taxon>
        <taxon>Acinetobacter</taxon>
        <taxon>Acinetobacter calcoaceticus/baumannii complex</taxon>
    </lineage>
</organism>
<keyword id="KW-0067">ATP-binding</keyword>
<keyword id="KW-0143">Chaperone</keyword>
<keyword id="KW-0963">Cytoplasm</keyword>
<keyword id="KW-0413">Isomerase</keyword>
<keyword id="KW-0547">Nucleotide-binding</keyword>
<dbReference type="EC" id="5.6.1.7" evidence="1"/>
<dbReference type="EMBL" id="CP000863">
    <property type="protein sequence ID" value="ACC58220.1"/>
    <property type="molecule type" value="Genomic_DNA"/>
</dbReference>
<dbReference type="RefSeq" id="WP_001274622.1">
    <property type="nucleotide sequence ID" value="NZ_CP031380.1"/>
</dbReference>
<dbReference type="SMR" id="B2HXB6"/>
<dbReference type="KEGG" id="abc:ACICU_02908"/>
<dbReference type="HOGENOM" id="CLU_016503_3_0_6"/>
<dbReference type="Proteomes" id="UP000008839">
    <property type="component" value="Chromosome"/>
</dbReference>
<dbReference type="GO" id="GO:0005737">
    <property type="term" value="C:cytoplasm"/>
    <property type="evidence" value="ECO:0007669"/>
    <property type="project" value="UniProtKB-SubCell"/>
</dbReference>
<dbReference type="GO" id="GO:0005524">
    <property type="term" value="F:ATP binding"/>
    <property type="evidence" value="ECO:0007669"/>
    <property type="project" value="UniProtKB-UniRule"/>
</dbReference>
<dbReference type="GO" id="GO:0140662">
    <property type="term" value="F:ATP-dependent protein folding chaperone"/>
    <property type="evidence" value="ECO:0007669"/>
    <property type="project" value="InterPro"/>
</dbReference>
<dbReference type="GO" id="GO:0016853">
    <property type="term" value="F:isomerase activity"/>
    <property type="evidence" value="ECO:0007669"/>
    <property type="project" value="UniProtKB-KW"/>
</dbReference>
<dbReference type="GO" id="GO:0051082">
    <property type="term" value="F:unfolded protein binding"/>
    <property type="evidence" value="ECO:0007669"/>
    <property type="project" value="UniProtKB-UniRule"/>
</dbReference>
<dbReference type="GO" id="GO:0042026">
    <property type="term" value="P:protein refolding"/>
    <property type="evidence" value="ECO:0007669"/>
    <property type="project" value="UniProtKB-UniRule"/>
</dbReference>
<dbReference type="CDD" id="cd03344">
    <property type="entry name" value="GroEL"/>
    <property type="match status" value="1"/>
</dbReference>
<dbReference type="FunFam" id="1.10.560.10:FF:000001">
    <property type="entry name" value="60 kDa chaperonin"/>
    <property type="match status" value="1"/>
</dbReference>
<dbReference type="FunFam" id="3.50.7.10:FF:000001">
    <property type="entry name" value="60 kDa chaperonin"/>
    <property type="match status" value="1"/>
</dbReference>
<dbReference type="Gene3D" id="3.50.7.10">
    <property type="entry name" value="GroEL"/>
    <property type="match status" value="1"/>
</dbReference>
<dbReference type="Gene3D" id="1.10.560.10">
    <property type="entry name" value="GroEL-like equatorial domain"/>
    <property type="match status" value="1"/>
</dbReference>
<dbReference type="Gene3D" id="3.30.260.10">
    <property type="entry name" value="TCP-1-like chaperonin intermediate domain"/>
    <property type="match status" value="1"/>
</dbReference>
<dbReference type="HAMAP" id="MF_00600">
    <property type="entry name" value="CH60"/>
    <property type="match status" value="1"/>
</dbReference>
<dbReference type="InterPro" id="IPR018370">
    <property type="entry name" value="Chaperonin_Cpn60_CS"/>
</dbReference>
<dbReference type="InterPro" id="IPR001844">
    <property type="entry name" value="Cpn60/GroEL"/>
</dbReference>
<dbReference type="InterPro" id="IPR002423">
    <property type="entry name" value="Cpn60/GroEL/TCP-1"/>
</dbReference>
<dbReference type="InterPro" id="IPR027409">
    <property type="entry name" value="GroEL-like_apical_dom_sf"/>
</dbReference>
<dbReference type="InterPro" id="IPR027413">
    <property type="entry name" value="GROEL-like_equatorial_sf"/>
</dbReference>
<dbReference type="InterPro" id="IPR027410">
    <property type="entry name" value="TCP-1-like_intermed_sf"/>
</dbReference>
<dbReference type="NCBIfam" id="TIGR02348">
    <property type="entry name" value="GroEL"/>
    <property type="match status" value="1"/>
</dbReference>
<dbReference type="NCBIfam" id="NF000592">
    <property type="entry name" value="PRK00013.1"/>
    <property type="match status" value="1"/>
</dbReference>
<dbReference type="NCBIfam" id="NF009487">
    <property type="entry name" value="PRK12849.1"/>
    <property type="match status" value="1"/>
</dbReference>
<dbReference type="NCBIfam" id="NF009488">
    <property type="entry name" value="PRK12850.1"/>
    <property type="match status" value="1"/>
</dbReference>
<dbReference type="NCBIfam" id="NF009489">
    <property type="entry name" value="PRK12851.1"/>
    <property type="match status" value="1"/>
</dbReference>
<dbReference type="PANTHER" id="PTHR45633">
    <property type="entry name" value="60 KDA HEAT SHOCK PROTEIN, MITOCHONDRIAL"/>
    <property type="match status" value="1"/>
</dbReference>
<dbReference type="Pfam" id="PF00118">
    <property type="entry name" value="Cpn60_TCP1"/>
    <property type="match status" value="1"/>
</dbReference>
<dbReference type="PRINTS" id="PR00298">
    <property type="entry name" value="CHAPERONIN60"/>
</dbReference>
<dbReference type="SUPFAM" id="SSF52029">
    <property type="entry name" value="GroEL apical domain-like"/>
    <property type="match status" value="1"/>
</dbReference>
<dbReference type="SUPFAM" id="SSF48592">
    <property type="entry name" value="GroEL equatorial domain-like"/>
    <property type="match status" value="1"/>
</dbReference>
<dbReference type="SUPFAM" id="SSF54849">
    <property type="entry name" value="GroEL-intermediate domain like"/>
    <property type="match status" value="1"/>
</dbReference>
<dbReference type="PROSITE" id="PS00296">
    <property type="entry name" value="CHAPERONINS_CPN60"/>
    <property type="match status" value="1"/>
</dbReference>
<name>CH60_ACIBC</name>
<reference key="1">
    <citation type="journal article" date="2008" name="Antimicrob. Agents Chemother.">
        <title>Whole-genome pyrosequencing of an epidemic multidrug-resistant Acinetobacter baumannii strain belonging to the European clone II group.</title>
        <authorList>
            <person name="Iacono M."/>
            <person name="Villa L."/>
            <person name="Fortini D."/>
            <person name="Bordoni R."/>
            <person name="Imperi F."/>
            <person name="Bonnal R.J."/>
            <person name="Sicheritz-Ponten T."/>
            <person name="De Bellis G."/>
            <person name="Visca P."/>
            <person name="Cassone A."/>
            <person name="Carattoli A."/>
        </authorList>
    </citation>
    <scope>NUCLEOTIDE SEQUENCE [LARGE SCALE GENOMIC DNA]</scope>
    <source>
        <strain>ACICU</strain>
    </source>
</reference>
<feature type="chain" id="PRO_1000129958" description="Chaperonin GroEL">
    <location>
        <begin position="1"/>
        <end position="547"/>
    </location>
</feature>
<feature type="binding site" evidence="1">
    <location>
        <begin position="30"/>
        <end position="33"/>
    </location>
    <ligand>
        <name>ATP</name>
        <dbReference type="ChEBI" id="CHEBI:30616"/>
    </ligand>
</feature>
<feature type="binding site" evidence="1">
    <location>
        <position position="51"/>
    </location>
    <ligand>
        <name>ATP</name>
        <dbReference type="ChEBI" id="CHEBI:30616"/>
    </ligand>
</feature>
<feature type="binding site" evidence="1">
    <location>
        <begin position="87"/>
        <end position="91"/>
    </location>
    <ligand>
        <name>ATP</name>
        <dbReference type="ChEBI" id="CHEBI:30616"/>
    </ligand>
</feature>
<feature type="binding site" evidence="1">
    <location>
        <position position="415"/>
    </location>
    <ligand>
        <name>ATP</name>
        <dbReference type="ChEBI" id="CHEBI:30616"/>
    </ligand>
</feature>
<feature type="binding site" evidence="1">
    <location>
        <begin position="479"/>
        <end position="481"/>
    </location>
    <ligand>
        <name>ATP</name>
        <dbReference type="ChEBI" id="CHEBI:30616"/>
    </ligand>
</feature>
<feature type="binding site" evidence="1">
    <location>
        <position position="495"/>
    </location>
    <ligand>
        <name>ATP</name>
        <dbReference type="ChEBI" id="CHEBI:30616"/>
    </ligand>
</feature>
<sequence length="547" mass="57412">MSAKDVKFGDSARSKMIAGVNVLADAVKVTLGPKGRNVVIDRSFGAPHITKDGVTVAKEISLKDKFENMGAQLVREVSSKTNDIAGDGTTTATVLAQAILNEGIKSVTAGMNPMDLKRGIDIAVKTVVENIRSIAKPADDFKAIEQVGSISANSDTTVGKLIAQAMEKVGKEGVITVEEGSGFEDALDVVEGMQFDRGYISPYFANKQDTLTAELENPFILLVDKKISNIRELISVLEAVAKTGKPLLIIAEDVEGEALATLVVNNMRGIIKVCAVKAPGFGDRRKAMLQDIAILTGATVISEEVGMSLEQATLQDLGTAHKITVSKENTVIVDGAGDAAAIAERVQQIRAQIEESTSEYDREKLQERVAKLAGGVAVIKIGAATEVEMKEKKDRVDDALHATRAAVEEGVVAGGGVALVRAVNALEGLKGANEDQTAGINILRRAIEAPLRQIVANAGDEPSVVINAVKNGEGNFGYNAATGEYGDMLEMGILDPAKVTRSALEHAASVAGLMLTTECMITDIPEDKPAAPDMGGMGGMGGMGGMM</sequence>
<protein>
    <recommendedName>
        <fullName evidence="1">Chaperonin GroEL</fullName>
        <ecNumber evidence="1">5.6.1.7</ecNumber>
    </recommendedName>
    <alternativeName>
        <fullName evidence="1">60 kDa chaperonin</fullName>
    </alternativeName>
    <alternativeName>
        <fullName evidence="1">Chaperonin-60</fullName>
        <shortName evidence="1">Cpn60</shortName>
    </alternativeName>
</protein>
<gene>
    <name evidence="1" type="primary">groEL</name>
    <name evidence="1" type="synonym">groL</name>
    <name type="ordered locus">ACICU_02908</name>
</gene>
<accession>B2HXB6</accession>
<proteinExistence type="inferred from homology"/>
<evidence type="ECO:0000255" key="1">
    <source>
        <dbReference type="HAMAP-Rule" id="MF_00600"/>
    </source>
</evidence>